<sequence>MSARCQITGRTVGFGKAVSHSHRRTRRRWPPNIQLKAYYLPSEDRRIKVRVSAQGIKVIDRDGHRGRRRAARAGSAPAHFARQAGSSLRTAAIL</sequence>
<proteinExistence type="inferred from homology"/>
<accession>P0A5V7</accession>
<accession>A0A1R3XUJ0</accession>
<accession>Q10879</accession>
<accession>X2BE14</accession>
<reference key="1">
    <citation type="journal article" date="2003" name="Proc. Natl. Acad. Sci. U.S.A.">
        <title>The complete genome sequence of Mycobacterium bovis.</title>
        <authorList>
            <person name="Garnier T."/>
            <person name="Eiglmeier K."/>
            <person name="Camus J.-C."/>
            <person name="Medina N."/>
            <person name="Mansoor H."/>
            <person name="Pryor M."/>
            <person name="Duthoy S."/>
            <person name="Grondin S."/>
            <person name="Lacroix C."/>
            <person name="Monsempe C."/>
            <person name="Simon S."/>
            <person name="Harris B."/>
            <person name="Atkin R."/>
            <person name="Doggett J."/>
            <person name="Mayes R."/>
            <person name="Keating L."/>
            <person name="Wheeler P.R."/>
            <person name="Parkhill J."/>
            <person name="Barrell B.G."/>
            <person name="Cole S.T."/>
            <person name="Gordon S.V."/>
            <person name="Hewinson R.G."/>
        </authorList>
    </citation>
    <scope>NUCLEOTIDE SEQUENCE [LARGE SCALE GENOMIC DNA]</scope>
    <source>
        <strain>ATCC BAA-935 / AF2122/97</strain>
    </source>
</reference>
<reference key="2">
    <citation type="journal article" date="2017" name="Genome Announc.">
        <title>Updated reference genome sequence and annotation of Mycobacterium bovis AF2122/97.</title>
        <authorList>
            <person name="Malone K.M."/>
            <person name="Farrell D."/>
            <person name="Stuber T.P."/>
            <person name="Schubert O.T."/>
            <person name="Aebersold R."/>
            <person name="Robbe-Austerman S."/>
            <person name="Gordon S.V."/>
        </authorList>
    </citation>
    <scope>NUCLEOTIDE SEQUENCE [LARGE SCALE GENOMIC DNA]</scope>
    <scope>GENOME REANNOTATION</scope>
    <source>
        <strain>ATCC BAA-935 / AF2122/97</strain>
    </source>
</reference>
<feature type="chain" id="PRO_0000178501" description="Large ribosomal subunit protein bL28A">
    <location>
        <begin position="1"/>
        <end position="94"/>
    </location>
</feature>
<feature type="region of interest" description="Disordered" evidence="2">
    <location>
        <begin position="63"/>
        <end position="94"/>
    </location>
</feature>
<feature type="compositionally biased region" description="Low complexity" evidence="2">
    <location>
        <begin position="72"/>
        <end position="82"/>
    </location>
</feature>
<feature type="compositionally biased region" description="Polar residues" evidence="2">
    <location>
        <begin position="84"/>
        <end position="94"/>
    </location>
</feature>
<organism>
    <name type="scientific">Mycobacterium bovis (strain ATCC BAA-935 / AF2122/97)</name>
    <dbReference type="NCBI Taxonomy" id="233413"/>
    <lineage>
        <taxon>Bacteria</taxon>
        <taxon>Bacillati</taxon>
        <taxon>Actinomycetota</taxon>
        <taxon>Actinomycetes</taxon>
        <taxon>Mycobacteriales</taxon>
        <taxon>Mycobacteriaceae</taxon>
        <taxon>Mycobacterium</taxon>
        <taxon>Mycobacterium tuberculosis complex</taxon>
    </lineage>
</organism>
<evidence type="ECO:0000255" key="1">
    <source>
        <dbReference type="HAMAP-Rule" id="MF_00373"/>
    </source>
</evidence>
<evidence type="ECO:0000256" key="2">
    <source>
        <dbReference type="SAM" id="MobiDB-lite"/>
    </source>
</evidence>
<evidence type="ECO:0000305" key="3"/>
<keyword id="KW-1185">Reference proteome</keyword>
<keyword id="KW-0687">Ribonucleoprotein</keyword>
<keyword id="KW-0689">Ribosomal protein</keyword>
<comment type="similarity">
    <text evidence="1">Belongs to the bacterial ribosomal protein bL28 family.</text>
</comment>
<name>RL28A_MYCBO</name>
<dbReference type="EMBL" id="LT708304">
    <property type="protein sequence ID" value="SIT98515.1"/>
    <property type="molecule type" value="Genomic_DNA"/>
</dbReference>
<dbReference type="RefSeq" id="NP_853776.1">
    <property type="nucleotide sequence ID" value="NC_002945.3"/>
</dbReference>
<dbReference type="RefSeq" id="WP_003400802.1">
    <property type="nucleotide sequence ID" value="NC_002945.4"/>
</dbReference>
<dbReference type="SMR" id="P0A5V7"/>
<dbReference type="PATRIC" id="fig|233413.5.peg.120"/>
<dbReference type="Proteomes" id="UP000001419">
    <property type="component" value="Chromosome"/>
</dbReference>
<dbReference type="GO" id="GO:1990904">
    <property type="term" value="C:ribonucleoprotein complex"/>
    <property type="evidence" value="ECO:0007669"/>
    <property type="project" value="UniProtKB-KW"/>
</dbReference>
<dbReference type="GO" id="GO:0005840">
    <property type="term" value="C:ribosome"/>
    <property type="evidence" value="ECO:0007669"/>
    <property type="project" value="UniProtKB-KW"/>
</dbReference>
<dbReference type="GO" id="GO:0003735">
    <property type="term" value="F:structural constituent of ribosome"/>
    <property type="evidence" value="ECO:0007669"/>
    <property type="project" value="InterPro"/>
</dbReference>
<dbReference type="GO" id="GO:0006412">
    <property type="term" value="P:translation"/>
    <property type="evidence" value="ECO:0007669"/>
    <property type="project" value="UniProtKB-UniRule"/>
</dbReference>
<dbReference type="Gene3D" id="2.30.170.40">
    <property type="entry name" value="Ribosomal protein L28/L24"/>
    <property type="match status" value="1"/>
</dbReference>
<dbReference type="HAMAP" id="MF_00373">
    <property type="entry name" value="Ribosomal_bL28"/>
    <property type="match status" value="1"/>
</dbReference>
<dbReference type="InterPro" id="IPR026569">
    <property type="entry name" value="Ribosomal_bL28"/>
</dbReference>
<dbReference type="InterPro" id="IPR034704">
    <property type="entry name" value="Ribosomal_bL28/bL31-like_sf"/>
</dbReference>
<dbReference type="InterPro" id="IPR001383">
    <property type="entry name" value="Ribosomal_bL28_bact-type"/>
</dbReference>
<dbReference type="InterPro" id="IPR037147">
    <property type="entry name" value="Ribosomal_bL28_sf"/>
</dbReference>
<dbReference type="NCBIfam" id="TIGR00009">
    <property type="entry name" value="L28"/>
    <property type="match status" value="1"/>
</dbReference>
<dbReference type="PANTHER" id="PTHR13528">
    <property type="entry name" value="39S RIBOSOMAL PROTEIN L28, MITOCHONDRIAL"/>
    <property type="match status" value="1"/>
</dbReference>
<dbReference type="PANTHER" id="PTHR13528:SF2">
    <property type="entry name" value="LARGE RIBOSOMAL SUBUNIT PROTEIN BL28M"/>
    <property type="match status" value="1"/>
</dbReference>
<dbReference type="Pfam" id="PF00830">
    <property type="entry name" value="Ribosomal_L28"/>
    <property type="match status" value="1"/>
</dbReference>
<dbReference type="SUPFAM" id="SSF143800">
    <property type="entry name" value="L28p-like"/>
    <property type="match status" value="1"/>
</dbReference>
<protein>
    <recommendedName>
        <fullName evidence="1">Large ribosomal subunit protein bL28A</fullName>
    </recommendedName>
    <alternativeName>
        <fullName evidence="3">50S ribosomal protein L28 1</fullName>
    </alternativeName>
</protein>
<gene>
    <name type="primary">rpmB1</name>
    <name type="synonym">rpmB</name>
    <name type="ordered locus">BQ2027_MB0108C</name>
</gene>